<protein>
    <recommendedName>
        <fullName>B3 domain-containing protein At2g32645</fullName>
    </recommendedName>
</protein>
<organism>
    <name type="scientific">Arabidopsis thaliana</name>
    <name type="common">Mouse-ear cress</name>
    <dbReference type="NCBI Taxonomy" id="3702"/>
    <lineage>
        <taxon>Eukaryota</taxon>
        <taxon>Viridiplantae</taxon>
        <taxon>Streptophyta</taxon>
        <taxon>Embryophyta</taxon>
        <taxon>Tracheophyta</taxon>
        <taxon>Spermatophyta</taxon>
        <taxon>Magnoliopsida</taxon>
        <taxon>eudicotyledons</taxon>
        <taxon>Gunneridae</taxon>
        <taxon>Pentapetalae</taxon>
        <taxon>rosids</taxon>
        <taxon>malvids</taxon>
        <taxon>Brassicales</taxon>
        <taxon>Brassicaceae</taxon>
        <taxon>Camelineae</taxon>
        <taxon>Arabidopsis</taxon>
    </lineage>
</organism>
<accession>Q1G3B8</accession>
<accession>A0MDZ7</accession>
<dbReference type="EMBL" id="AC003974">
    <property type="status" value="NOT_ANNOTATED_CDS"/>
    <property type="molecule type" value="Genomic_DNA"/>
</dbReference>
<dbReference type="EMBL" id="CP002685">
    <property type="protein sequence ID" value="AEC08712.1"/>
    <property type="molecule type" value="Genomic_DNA"/>
</dbReference>
<dbReference type="EMBL" id="DQ487666">
    <property type="protein sequence ID" value="ABF59436.1"/>
    <property type="status" value="ALT_SEQ"/>
    <property type="molecule type" value="Genomic_DNA"/>
</dbReference>
<dbReference type="EMBL" id="DQ652763">
    <property type="protein sequence ID" value="ABK28096.1"/>
    <property type="status" value="ALT_SEQ"/>
    <property type="molecule type" value="Genomic_DNA"/>
</dbReference>
<dbReference type="RefSeq" id="NP_001118432.1">
    <property type="nucleotide sequence ID" value="NM_001124960.1"/>
</dbReference>
<dbReference type="SMR" id="Q1G3B8"/>
<dbReference type="PaxDb" id="3702-AT2G32645.1"/>
<dbReference type="EnsemblPlants" id="AT2G32645.1">
    <property type="protein sequence ID" value="AT2G32645.1"/>
    <property type="gene ID" value="AT2G32645"/>
</dbReference>
<dbReference type="GeneID" id="6241414"/>
<dbReference type="Gramene" id="AT2G32645.1">
    <property type="protein sequence ID" value="AT2G32645.1"/>
    <property type="gene ID" value="AT2G32645"/>
</dbReference>
<dbReference type="KEGG" id="ath:AT2G32645"/>
<dbReference type="Araport" id="AT2G32645"/>
<dbReference type="TAIR" id="AT2G32645"/>
<dbReference type="HOGENOM" id="CLU_1436268_0_0_1"/>
<dbReference type="InParanoid" id="Q1G3B8"/>
<dbReference type="OMA" id="STRPPKW"/>
<dbReference type="PhylomeDB" id="Q1G3B8"/>
<dbReference type="PRO" id="PR:Q1G3B8"/>
<dbReference type="Proteomes" id="UP000006548">
    <property type="component" value="Chromosome 2"/>
</dbReference>
<dbReference type="ExpressionAtlas" id="Q1G3B8">
    <property type="expression patterns" value="differential"/>
</dbReference>
<dbReference type="GO" id="GO:0005634">
    <property type="term" value="C:nucleus"/>
    <property type="evidence" value="ECO:0007669"/>
    <property type="project" value="UniProtKB-SubCell"/>
</dbReference>
<dbReference type="GO" id="GO:0003677">
    <property type="term" value="F:DNA binding"/>
    <property type="evidence" value="ECO:0007669"/>
    <property type="project" value="UniProtKB-KW"/>
</dbReference>
<dbReference type="Gene3D" id="2.40.330.10">
    <property type="entry name" value="DNA-binding pseudobarrel domain"/>
    <property type="match status" value="1"/>
</dbReference>
<dbReference type="InterPro" id="IPR005508">
    <property type="entry name" value="At2g31720-like"/>
</dbReference>
<dbReference type="InterPro" id="IPR015300">
    <property type="entry name" value="DNA-bd_pseudobarrel_sf"/>
</dbReference>
<dbReference type="PANTHER" id="PTHR31541">
    <property type="entry name" value="B3 DOMAIN PLANT PROTEIN-RELATED"/>
    <property type="match status" value="1"/>
</dbReference>
<dbReference type="PANTHER" id="PTHR31541:SF56">
    <property type="entry name" value="DOMAIN PROTEIN, PUTATIVE (DUF313)-RELATED"/>
    <property type="match status" value="1"/>
</dbReference>
<dbReference type="Pfam" id="PF03754">
    <property type="entry name" value="At2g31720-like"/>
    <property type="match status" value="1"/>
</dbReference>
<dbReference type="SUPFAM" id="SSF101936">
    <property type="entry name" value="DNA-binding pseudobarrel domain"/>
    <property type="match status" value="1"/>
</dbReference>
<name>Y2272_ARATH</name>
<keyword id="KW-0238">DNA-binding</keyword>
<keyword id="KW-0539">Nucleus</keyword>
<keyword id="KW-1185">Reference proteome</keyword>
<keyword id="KW-0804">Transcription</keyword>
<keyword id="KW-0805">Transcription regulation</keyword>
<reference key="1">
    <citation type="journal article" date="1999" name="Nature">
        <title>Sequence and analysis of chromosome 2 of the plant Arabidopsis thaliana.</title>
        <authorList>
            <person name="Lin X."/>
            <person name="Kaul S."/>
            <person name="Rounsley S.D."/>
            <person name="Shea T.P."/>
            <person name="Benito M.-I."/>
            <person name="Town C.D."/>
            <person name="Fujii C.Y."/>
            <person name="Mason T.M."/>
            <person name="Bowman C.L."/>
            <person name="Barnstead M.E."/>
            <person name="Feldblyum T.V."/>
            <person name="Buell C.R."/>
            <person name="Ketchum K.A."/>
            <person name="Lee J.J."/>
            <person name="Ronning C.M."/>
            <person name="Koo H.L."/>
            <person name="Moffat K.S."/>
            <person name="Cronin L.A."/>
            <person name="Shen M."/>
            <person name="Pai G."/>
            <person name="Van Aken S."/>
            <person name="Umayam L."/>
            <person name="Tallon L.J."/>
            <person name="Gill J.E."/>
            <person name="Adams M.D."/>
            <person name="Carrera A.J."/>
            <person name="Creasy T.H."/>
            <person name="Goodman H.M."/>
            <person name="Somerville C.R."/>
            <person name="Copenhaver G.P."/>
            <person name="Preuss D."/>
            <person name="Nierman W.C."/>
            <person name="White O."/>
            <person name="Eisen J.A."/>
            <person name="Salzberg S.L."/>
            <person name="Fraser C.M."/>
            <person name="Venter J.C."/>
        </authorList>
    </citation>
    <scope>NUCLEOTIDE SEQUENCE [LARGE SCALE GENOMIC DNA]</scope>
    <source>
        <strain>cv. Columbia</strain>
    </source>
</reference>
<reference key="2">
    <citation type="journal article" date="2017" name="Plant J.">
        <title>Araport11: a complete reannotation of the Arabidopsis thaliana reference genome.</title>
        <authorList>
            <person name="Cheng C.Y."/>
            <person name="Krishnakumar V."/>
            <person name="Chan A.P."/>
            <person name="Thibaud-Nissen F."/>
            <person name="Schobel S."/>
            <person name="Town C.D."/>
        </authorList>
    </citation>
    <scope>GENOME REANNOTATION</scope>
    <source>
        <strain>cv. Columbia</strain>
    </source>
</reference>
<reference key="3">
    <citation type="journal article" date="2006" name="Plant Biotechnol. J.">
        <title>Simultaneous high-throughput recombinational cloning of open reading frames in closed and open configurations.</title>
        <authorList>
            <person name="Underwood B.A."/>
            <person name="Vanderhaeghen R."/>
            <person name="Whitford R."/>
            <person name="Town C.D."/>
            <person name="Hilson P."/>
        </authorList>
    </citation>
    <scope>NUCLEOTIDE SEQUENCE [LARGE SCALE GENOMIC DNA]</scope>
    <source>
        <strain>cv. Columbia</strain>
    </source>
</reference>
<reference key="4">
    <citation type="journal article" date="2008" name="Trends Plant Sci.">
        <title>The plant B3 superfamily.</title>
        <authorList>
            <person name="Swaminathan K."/>
            <person name="Peterson K."/>
            <person name="Jack T."/>
        </authorList>
    </citation>
    <scope>GENE FAMILY</scope>
</reference>
<feature type="chain" id="PRO_0000375131" description="B3 domain-containing protein At2g32645">
    <location>
        <begin position="1"/>
        <end position="189"/>
    </location>
</feature>
<feature type="DNA-binding region" description="TF-B3">
    <location>
        <begin position="33"/>
        <end position="133"/>
    </location>
</feature>
<proteinExistence type="evidence at transcript level"/>
<gene>
    <name type="ordered locus">At2g32645</name>
    <name type="ORF">F24L7</name>
</gene>
<evidence type="ECO:0000250" key="1"/>
<evidence type="ECO:0000305" key="2"/>
<sequence length="189" mass="22022">MRNENGYNPKLISTRELFKSDLDKGKARLQVPFNQVKTPDFLTEDETRIIHENAMKIRDDGVPVNLVDPRMNKHALELRKWKMKGNWNYVFVKGWNDVLDANKSNSFKEKDVFPLWSFRSGTGKLCFALTPKIPATALLQENLAVAAMVLLLEVNLVRTKERELVFLYYHKKIHQATTTHNKCKVSWLY</sequence>
<comment type="subcellular location">
    <subcellularLocation>
        <location evidence="1">Nucleus</location>
    </subcellularLocation>
</comment>
<comment type="sequence caution" evidence="2">
    <conflict type="erroneous gene model prediction">
        <sequence resource="EMBL-CDS" id="ABF59436"/>
    </conflict>
</comment>
<comment type="sequence caution" evidence="2">
    <conflict type="erroneous gene model prediction">
        <sequence resource="EMBL-CDS" id="ABK28096"/>
    </conflict>
</comment>